<keyword id="KW-0414">Isoprene biosynthesis</keyword>
<keyword id="KW-0548">Nucleotidyltransferase</keyword>
<keyword id="KW-1185">Reference proteome</keyword>
<keyword id="KW-0808">Transferase</keyword>
<reference key="1">
    <citation type="journal article" date="2005" name="Proc. Natl. Acad. Sci. U.S.A.">
        <title>Complete genome sequence of Vibrio fischeri: a symbiotic bacterium with pathogenic congeners.</title>
        <authorList>
            <person name="Ruby E.G."/>
            <person name="Urbanowski M."/>
            <person name="Campbell J."/>
            <person name="Dunn A."/>
            <person name="Faini M."/>
            <person name="Gunsalus R."/>
            <person name="Lostroh P."/>
            <person name="Lupp C."/>
            <person name="McCann J."/>
            <person name="Millikan D."/>
            <person name="Schaefer A."/>
            <person name="Stabb E."/>
            <person name="Stevens A."/>
            <person name="Visick K."/>
            <person name="Whistler C."/>
            <person name="Greenberg E.P."/>
        </authorList>
    </citation>
    <scope>NUCLEOTIDE SEQUENCE [LARGE SCALE GENOMIC DNA]</scope>
    <source>
        <strain>ATCC 700601 / ES114</strain>
    </source>
</reference>
<organism>
    <name type="scientific">Aliivibrio fischeri (strain ATCC 700601 / ES114)</name>
    <name type="common">Vibrio fischeri</name>
    <dbReference type="NCBI Taxonomy" id="312309"/>
    <lineage>
        <taxon>Bacteria</taxon>
        <taxon>Pseudomonadati</taxon>
        <taxon>Pseudomonadota</taxon>
        <taxon>Gammaproteobacteria</taxon>
        <taxon>Vibrionales</taxon>
        <taxon>Vibrionaceae</taxon>
        <taxon>Aliivibrio</taxon>
    </lineage>
</organism>
<evidence type="ECO:0000255" key="1">
    <source>
        <dbReference type="HAMAP-Rule" id="MF_00108"/>
    </source>
</evidence>
<dbReference type="EC" id="2.7.7.60" evidence="1"/>
<dbReference type="EMBL" id="CP000020">
    <property type="protein sequence ID" value="AAW86568.1"/>
    <property type="molecule type" value="Genomic_DNA"/>
</dbReference>
<dbReference type="RefSeq" id="WP_011262540.1">
    <property type="nucleotide sequence ID" value="NC_006840.2"/>
</dbReference>
<dbReference type="RefSeq" id="YP_205456.1">
    <property type="nucleotide sequence ID" value="NC_006840.2"/>
</dbReference>
<dbReference type="SMR" id="Q5E328"/>
<dbReference type="STRING" id="312309.VF_2073"/>
<dbReference type="EnsemblBacteria" id="AAW86568">
    <property type="protein sequence ID" value="AAW86568"/>
    <property type="gene ID" value="VF_2073"/>
</dbReference>
<dbReference type="GeneID" id="54164779"/>
<dbReference type="KEGG" id="vfi:VF_2073"/>
<dbReference type="PATRIC" id="fig|312309.11.peg.2116"/>
<dbReference type="eggNOG" id="COG1211">
    <property type="taxonomic scope" value="Bacteria"/>
</dbReference>
<dbReference type="HOGENOM" id="CLU_061281_3_1_6"/>
<dbReference type="OrthoDB" id="9806837at2"/>
<dbReference type="UniPathway" id="UPA00056">
    <property type="reaction ID" value="UER00093"/>
</dbReference>
<dbReference type="Proteomes" id="UP000000537">
    <property type="component" value="Chromosome I"/>
</dbReference>
<dbReference type="GO" id="GO:0050518">
    <property type="term" value="F:2-C-methyl-D-erythritol 4-phosphate cytidylyltransferase activity"/>
    <property type="evidence" value="ECO:0007669"/>
    <property type="project" value="UniProtKB-UniRule"/>
</dbReference>
<dbReference type="GO" id="GO:0019288">
    <property type="term" value="P:isopentenyl diphosphate biosynthetic process, methylerythritol 4-phosphate pathway"/>
    <property type="evidence" value="ECO:0007669"/>
    <property type="project" value="UniProtKB-UniRule"/>
</dbReference>
<dbReference type="CDD" id="cd02516">
    <property type="entry name" value="CDP-ME_synthetase"/>
    <property type="match status" value="1"/>
</dbReference>
<dbReference type="FunFam" id="3.90.550.10:FF:000003">
    <property type="entry name" value="2-C-methyl-D-erythritol 4-phosphate cytidylyltransferase"/>
    <property type="match status" value="1"/>
</dbReference>
<dbReference type="Gene3D" id="3.90.550.10">
    <property type="entry name" value="Spore Coat Polysaccharide Biosynthesis Protein SpsA, Chain A"/>
    <property type="match status" value="1"/>
</dbReference>
<dbReference type="HAMAP" id="MF_00108">
    <property type="entry name" value="IspD"/>
    <property type="match status" value="1"/>
</dbReference>
<dbReference type="InterPro" id="IPR001228">
    <property type="entry name" value="IspD"/>
</dbReference>
<dbReference type="InterPro" id="IPR034683">
    <property type="entry name" value="IspD/TarI"/>
</dbReference>
<dbReference type="InterPro" id="IPR050088">
    <property type="entry name" value="IspD/TarI_cytidylyltransf_bact"/>
</dbReference>
<dbReference type="InterPro" id="IPR018294">
    <property type="entry name" value="ISPD_synthase_CS"/>
</dbReference>
<dbReference type="InterPro" id="IPR029044">
    <property type="entry name" value="Nucleotide-diphossugar_trans"/>
</dbReference>
<dbReference type="NCBIfam" id="TIGR00453">
    <property type="entry name" value="ispD"/>
    <property type="match status" value="1"/>
</dbReference>
<dbReference type="PANTHER" id="PTHR32125">
    <property type="entry name" value="2-C-METHYL-D-ERYTHRITOL 4-PHOSPHATE CYTIDYLYLTRANSFERASE, CHLOROPLASTIC"/>
    <property type="match status" value="1"/>
</dbReference>
<dbReference type="PANTHER" id="PTHR32125:SF4">
    <property type="entry name" value="2-C-METHYL-D-ERYTHRITOL 4-PHOSPHATE CYTIDYLYLTRANSFERASE, CHLOROPLASTIC"/>
    <property type="match status" value="1"/>
</dbReference>
<dbReference type="Pfam" id="PF01128">
    <property type="entry name" value="IspD"/>
    <property type="match status" value="1"/>
</dbReference>
<dbReference type="SUPFAM" id="SSF53448">
    <property type="entry name" value="Nucleotide-diphospho-sugar transferases"/>
    <property type="match status" value="1"/>
</dbReference>
<dbReference type="PROSITE" id="PS01295">
    <property type="entry name" value="ISPD"/>
    <property type="match status" value="1"/>
</dbReference>
<sequence>MTLTTPLSITAIVPAAGVGSRMKADRPKQYLLLNGKTVLEHTIEQLLAFPLVNKVVVAITDGDPYFPELTLAHDSRVIRVSGGKERADSVLSGLSYVQEHQLSEWVMVHDAARPCIRHSDIDKLIAEVIPEHIGGILASPVRDTMKHATQEQCIETTIDRSVLWHALTPQLFTTELLFSALQTGLEQNLSITDESSAIELMGYQPKLVQGRADNLKITQPEDLDLAEFYLQKMKKETK</sequence>
<comment type="function">
    <text evidence="1">Catalyzes the formation of 4-diphosphocytidyl-2-C-methyl-D-erythritol from CTP and 2-C-methyl-D-erythritol 4-phosphate (MEP).</text>
</comment>
<comment type="catalytic activity">
    <reaction evidence="1">
        <text>2-C-methyl-D-erythritol 4-phosphate + CTP + H(+) = 4-CDP-2-C-methyl-D-erythritol + diphosphate</text>
        <dbReference type="Rhea" id="RHEA:13429"/>
        <dbReference type="ChEBI" id="CHEBI:15378"/>
        <dbReference type="ChEBI" id="CHEBI:33019"/>
        <dbReference type="ChEBI" id="CHEBI:37563"/>
        <dbReference type="ChEBI" id="CHEBI:57823"/>
        <dbReference type="ChEBI" id="CHEBI:58262"/>
        <dbReference type="EC" id="2.7.7.60"/>
    </reaction>
</comment>
<comment type="pathway">
    <text evidence="1">Isoprenoid biosynthesis; isopentenyl diphosphate biosynthesis via DXP pathway; isopentenyl diphosphate from 1-deoxy-D-xylulose 5-phosphate: step 2/6.</text>
</comment>
<comment type="similarity">
    <text evidence="1">Belongs to the IspD/TarI cytidylyltransferase family. IspD subfamily.</text>
</comment>
<protein>
    <recommendedName>
        <fullName evidence="1">2-C-methyl-D-erythritol 4-phosphate cytidylyltransferase</fullName>
        <ecNumber evidence="1">2.7.7.60</ecNumber>
    </recommendedName>
    <alternativeName>
        <fullName evidence="1">4-diphosphocytidyl-2C-methyl-D-erythritol synthase</fullName>
    </alternativeName>
    <alternativeName>
        <fullName evidence="1">MEP cytidylyltransferase</fullName>
        <shortName evidence="1">MCT</shortName>
    </alternativeName>
</protein>
<gene>
    <name evidence="1" type="primary">ispD</name>
    <name type="ordered locus">VF_2073</name>
</gene>
<name>ISPD_ALIF1</name>
<feature type="chain" id="PRO_0000075643" description="2-C-methyl-D-erythritol 4-phosphate cytidylyltransferase">
    <location>
        <begin position="1"/>
        <end position="238"/>
    </location>
</feature>
<feature type="site" description="Transition state stabilizer" evidence="1">
    <location>
        <position position="21"/>
    </location>
</feature>
<feature type="site" description="Transition state stabilizer" evidence="1">
    <location>
        <position position="28"/>
    </location>
</feature>
<feature type="site" description="Positions MEP for the nucleophilic attack" evidence="1">
    <location>
        <position position="160"/>
    </location>
</feature>
<feature type="site" description="Positions MEP for the nucleophilic attack" evidence="1">
    <location>
        <position position="216"/>
    </location>
</feature>
<proteinExistence type="inferred from homology"/>
<accession>Q5E328</accession>